<comment type="function">
    <text evidence="1">Cecropins have lytic and antibacterial activity against several Gram-positive and Gram-negative bacteria.</text>
</comment>
<comment type="subcellular location">
    <subcellularLocation>
        <location evidence="1">Secreted</location>
    </subcellularLocation>
</comment>
<comment type="similarity">
    <text evidence="3">Belongs to the cecropin family.</text>
</comment>
<feature type="signal peptide" evidence="2">
    <location>
        <begin position="1"/>
        <end position="23"/>
    </location>
</feature>
<feature type="chain" id="PRO_0000004838" description="Cecropin-B2">
    <location>
        <begin position="24"/>
        <end position="57"/>
    </location>
</feature>
<feature type="modified residue" description="Leucine amide" evidence="2">
    <location>
        <position position="57"/>
    </location>
</feature>
<name>CECB2_CULPP</name>
<gene>
    <name type="primary">CECB2</name>
</gene>
<keyword id="KW-0027">Amidation</keyword>
<keyword id="KW-0044">Antibiotic</keyword>
<keyword id="KW-0929">Antimicrobial</keyword>
<keyword id="KW-0391">Immunity</keyword>
<keyword id="KW-0399">Innate immunity</keyword>
<keyword id="KW-0964">Secreted</keyword>
<keyword id="KW-0732">Signal</keyword>
<accession>Q86PR4</accession>
<evidence type="ECO:0000250" key="1"/>
<evidence type="ECO:0000255" key="2"/>
<evidence type="ECO:0000305" key="3"/>
<protein>
    <recommendedName>
        <fullName>Cecropin-B2</fullName>
    </recommendedName>
</protein>
<sequence>MNFNKLFLIVILAALLLLGQTEAGRSKKLGKKIEKAGKRVFNAAQKGLPVAAGVQALGR</sequence>
<organism>
    <name type="scientific">Culex pipiens pipiens</name>
    <name type="common">Northern house mosquito</name>
    <dbReference type="NCBI Taxonomy" id="38569"/>
    <lineage>
        <taxon>Eukaryota</taxon>
        <taxon>Metazoa</taxon>
        <taxon>Ecdysozoa</taxon>
        <taxon>Arthropoda</taxon>
        <taxon>Hexapoda</taxon>
        <taxon>Insecta</taxon>
        <taxon>Pterygota</taxon>
        <taxon>Neoptera</taxon>
        <taxon>Endopterygota</taxon>
        <taxon>Diptera</taxon>
        <taxon>Nematocera</taxon>
        <taxon>Culicoidea</taxon>
        <taxon>Culicidae</taxon>
        <taxon>Culicinae</taxon>
        <taxon>Culicini</taxon>
        <taxon>Culex</taxon>
        <taxon>Culex</taxon>
    </lineage>
</organism>
<proteinExistence type="inferred from homology"/>
<reference key="1">
    <citation type="submission" date="2002-12" db="EMBL/GenBank/DDBJ databases">
        <title>Innate immunity in the Culex pipiens-Wuchereria bancrofti host-parasite relationship.</title>
        <authorList>
            <person name="Bartholomay L.C."/>
            <person name="Farid H.A."/>
            <person name="Ramzy R.M."/>
            <person name="Christensen B.M."/>
        </authorList>
    </citation>
    <scope>NUCLEOTIDE SEQUENCE [MRNA]</scope>
    <source>
        <strain>Iowa state</strain>
    </source>
</reference>
<dbReference type="EMBL" id="AY189810">
    <property type="protein sequence ID" value="AAO38518.1"/>
    <property type="molecule type" value="mRNA"/>
</dbReference>
<dbReference type="SMR" id="Q86PR4"/>
<dbReference type="GO" id="GO:0005615">
    <property type="term" value="C:extracellular space"/>
    <property type="evidence" value="ECO:0007669"/>
    <property type="project" value="TreeGrafter"/>
</dbReference>
<dbReference type="GO" id="GO:0019731">
    <property type="term" value="P:antibacterial humoral response"/>
    <property type="evidence" value="ECO:0007669"/>
    <property type="project" value="InterPro"/>
</dbReference>
<dbReference type="GO" id="GO:0050829">
    <property type="term" value="P:defense response to Gram-negative bacterium"/>
    <property type="evidence" value="ECO:0007669"/>
    <property type="project" value="TreeGrafter"/>
</dbReference>
<dbReference type="GO" id="GO:0050830">
    <property type="term" value="P:defense response to Gram-positive bacterium"/>
    <property type="evidence" value="ECO:0007669"/>
    <property type="project" value="UniProtKB-ARBA"/>
</dbReference>
<dbReference type="GO" id="GO:0045087">
    <property type="term" value="P:innate immune response"/>
    <property type="evidence" value="ECO:0007669"/>
    <property type="project" value="UniProtKB-KW"/>
</dbReference>
<dbReference type="InterPro" id="IPR000875">
    <property type="entry name" value="Cecropin"/>
</dbReference>
<dbReference type="InterPro" id="IPR020400">
    <property type="entry name" value="Cecropin_insect"/>
</dbReference>
<dbReference type="PANTHER" id="PTHR38329">
    <property type="entry name" value="CECROPIN-A1-RELATED"/>
    <property type="match status" value="1"/>
</dbReference>
<dbReference type="PANTHER" id="PTHR38329:SF1">
    <property type="entry name" value="CECROPIN-A1-RELATED"/>
    <property type="match status" value="1"/>
</dbReference>
<dbReference type="Pfam" id="PF00272">
    <property type="entry name" value="Cecropin"/>
    <property type="match status" value="1"/>
</dbReference>